<gene>
    <name type="primary">MGR1</name>
    <name type="ordered locus">CAALFM_C203460CA</name>
    <name type="ORF">CaO19.8493</name>
    <name type="ORF">CaO19.874</name>
</gene>
<dbReference type="EMBL" id="CP017624">
    <property type="protein sequence ID" value="AOW27382.1"/>
    <property type="molecule type" value="Genomic_DNA"/>
</dbReference>
<dbReference type="RefSeq" id="XP_720997.1">
    <property type="nucleotide sequence ID" value="XM_715904.1"/>
</dbReference>
<dbReference type="FunCoup" id="Q5AHC2">
    <property type="interactions" value="44"/>
</dbReference>
<dbReference type="EnsemblFungi" id="C2_03460C_A-T">
    <property type="protein sequence ID" value="C2_03460C_A-T-p1"/>
    <property type="gene ID" value="C2_03460C_A"/>
</dbReference>
<dbReference type="GeneID" id="3637348"/>
<dbReference type="KEGG" id="cal:CAALFM_C203460CA"/>
<dbReference type="CGD" id="CAL0000195839">
    <property type="gene designation" value="orf19.8493"/>
</dbReference>
<dbReference type="VEuPathDB" id="FungiDB:C2_03460C_A"/>
<dbReference type="eggNOG" id="ENOG502QR67">
    <property type="taxonomic scope" value="Eukaryota"/>
</dbReference>
<dbReference type="HOGENOM" id="CLU_871878_0_0_1"/>
<dbReference type="InParanoid" id="Q5AHC2"/>
<dbReference type="OrthoDB" id="4087899at2759"/>
<dbReference type="PRO" id="PR:Q5AHC2"/>
<dbReference type="Proteomes" id="UP000000559">
    <property type="component" value="Chromosome 2"/>
</dbReference>
<dbReference type="GO" id="GO:0005743">
    <property type="term" value="C:mitochondrial inner membrane"/>
    <property type="evidence" value="ECO:0007669"/>
    <property type="project" value="UniProtKB-SubCell"/>
</dbReference>
<dbReference type="InterPro" id="IPR013911">
    <property type="entry name" value="i-AAA_Mgr1"/>
</dbReference>
<dbReference type="Pfam" id="PF08602">
    <property type="entry name" value="Mgr1"/>
    <property type="match status" value="1"/>
</dbReference>
<feature type="chain" id="PRO_0000324410" description="Mitochondrial inner membrane i-AAA protease complex subunit MGR1">
    <location>
        <begin position="1"/>
        <end position="368"/>
    </location>
</feature>
<feature type="topological domain" description="Mitochondrial intermembrane" evidence="1">
    <location>
        <begin position="1"/>
        <end position="72"/>
    </location>
</feature>
<feature type="transmembrane region" description="Helical" evidence="2">
    <location>
        <begin position="73"/>
        <end position="89"/>
    </location>
</feature>
<feature type="topological domain" description="Mitochondrial matrix" evidence="1">
    <location>
        <begin position="90"/>
        <end position="124"/>
    </location>
</feature>
<feature type="transmembrane region" description="Helical" evidence="2">
    <location>
        <begin position="125"/>
        <end position="141"/>
    </location>
</feature>
<feature type="topological domain" description="Mitochondrial intermembrane" evidence="1">
    <location>
        <begin position="142"/>
        <end position="368"/>
    </location>
</feature>
<feature type="region of interest" description="Disordered" evidence="3">
    <location>
        <begin position="1"/>
        <end position="49"/>
    </location>
</feature>
<feature type="compositionally biased region" description="Basic and acidic residues" evidence="3">
    <location>
        <begin position="9"/>
        <end position="20"/>
    </location>
</feature>
<accession>Q5AHC2</accession>
<accession>A0A1D8PGV3</accession>
<reference key="1">
    <citation type="journal article" date="2004" name="Proc. Natl. Acad. Sci. U.S.A.">
        <title>The diploid genome sequence of Candida albicans.</title>
        <authorList>
            <person name="Jones T."/>
            <person name="Federspiel N.A."/>
            <person name="Chibana H."/>
            <person name="Dungan J."/>
            <person name="Kalman S."/>
            <person name="Magee B.B."/>
            <person name="Newport G."/>
            <person name="Thorstenson Y.R."/>
            <person name="Agabian N."/>
            <person name="Magee P.T."/>
            <person name="Davis R.W."/>
            <person name="Scherer S."/>
        </authorList>
    </citation>
    <scope>NUCLEOTIDE SEQUENCE [LARGE SCALE GENOMIC DNA]</scope>
    <source>
        <strain>SC5314 / ATCC MYA-2876</strain>
    </source>
</reference>
<reference key="2">
    <citation type="journal article" date="2007" name="Genome Biol.">
        <title>Assembly of the Candida albicans genome into sixteen supercontigs aligned on the eight chromosomes.</title>
        <authorList>
            <person name="van het Hoog M."/>
            <person name="Rast T.J."/>
            <person name="Martchenko M."/>
            <person name="Grindle S."/>
            <person name="Dignard D."/>
            <person name="Hogues H."/>
            <person name="Cuomo C."/>
            <person name="Berriman M."/>
            <person name="Scherer S."/>
            <person name="Magee B.B."/>
            <person name="Whiteway M."/>
            <person name="Chibana H."/>
            <person name="Nantel A."/>
            <person name="Magee P.T."/>
        </authorList>
    </citation>
    <scope>GENOME REANNOTATION</scope>
    <source>
        <strain>SC5314 / ATCC MYA-2876</strain>
    </source>
</reference>
<reference key="3">
    <citation type="journal article" date="2013" name="Genome Biol.">
        <title>Assembly of a phased diploid Candida albicans genome facilitates allele-specific measurements and provides a simple model for repeat and indel structure.</title>
        <authorList>
            <person name="Muzzey D."/>
            <person name="Schwartz K."/>
            <person name="Weissman J.S."/>
            <person name="Sherlock G."/>
        </authorList>
    </citation>
    <scope>NUCLEOTIDE SEQUENCE [LARGE SCALE GENOMIC DNA]</scope>
    <scope>GENOME REANNOTATION</scope>
    <source>
        <strain>SC5314 / ATCC MYA-2876</strain>
    </source>
</reference>
<evidence type="ECO:0000250" key="1"/>
<evidence type="ECO:0000255" key="2"/>
<evidence type="ECO:0000256" key="3">
    <source>
        <dbReference type="SAM" id="MobiDB-lite"/>
    </source>
</evidence>
<evidence type="ECO:0000305" key="4"/>
<proteinExistence type="inferred from homology"/>
<protein>
    <recommendedName>
        <fullName>Mitochondrial inner membrane i-AAA protease complex subunit MGR1</fullName>
    </recommendedName>
</protein>
<comment type="function">
    <text evidence="1">Component of the mitochondrial inner membrane i-AAA protease complex required for mitochondrial inner membrane protein turnover.</text>
</comment>
<comment type="subunit">
    <text evidence="1">Component of the mitochondrial inner membrane i-AAA protease complex.</text>
</comment>
<comment type="subcellular location">
    <subcellularLocation>
        <location evidence="1">Mitochondrion inner membrane</location>
        <topology evidence="1">Multi-pass membrane protein</topology>
    </subcellularLocation>
</comment>
<comment type="similarity">
    <text evidence="4">Belongs to the MGR1 family.</text>
</comment>
<name>MGR1_CANAL</name>
<sequence length="368" mass="41522">MGVYIPPPNDKDDGDKKKQDTNSNTNQPTPPSSSSPSGSTTIYIPNPASSIPRNPKVGLIWGPLTPASDNLPALYSMIGLQFVIGCGFFKYARTLSRLRPIGGFQQQPHAHMAPKLVRTGPIWKIALSVITGSALSFGSGLELCRVTLPYDPWYDEAQHYRRMAVKNGDKPSSWFGAYRYYKPMDFKTWIDKVGDWIENVEKEIKIDDPANFANLSLELGKNSNVINVQRQPQTSGGILNKLNNKGKYLEIYTKLNENNTKRWEKLLHEDLNEVTELNKAPRLDLILEGKSDLINPEFTKSAIILGNHTMDDDDQFEMVWLNFEPWDELKLDTEYDIRLVPSYAGATEEIENEDQESPLTDNVVAKQT</sequence>
<organism>
    <name type="scientific">Candida albicans (strain SC5314 / ATCC MYA-2876)</name>
    <name type="common">Yeast</name>
    <dbReference type="NCBI Taxonomy" id="237561"/>
    <lineage>
        <taxon>Eukaryota</taxon>
        <taxon>Fungi</taxon>
        <taxon>Dikarya</taxon>
        <taxon>Ascomycota</taxon>
        <taxon>Saccharomycotina</taxon>
        <taxon>Pichiomycetes</taxon>
        <taxon>Debaryomycetaceae</taxon>
        <taxon>Candida/Lodderomyces clade</taxon>
        <taxon>Candida</taxon>
    </lineage>
</organism>
<keyword id="KW-0472">Membrane</keyword>
<keyword id="KW-0496">Mitochondrion</keyword>
<keyword id="KW-0999">Mitochondrion inner membrane</keyword>
<keyword id="KW-1185">Reference proteome</keyword>
<keyword id="KW-0812">Transmembrane</keyword>
<keyword id="KW-1133">Transmembrane helix</keyword>